<comment type="function">
    <text evidence="1">Contactins mediate cell surface interactions during nervous system development. Participates in oligodendrocytes generation by acting as a ligand of NOTCH1. Its association with NOTCH1 promotes NOTCH1 activation through the released notch intracellular domain (NICD) and subsequent translocation to the nucleus. Involved in motor coordination (By similarity).</text>
</comment>
<comment type="subunit">
    <text evidence="7">Interacts with PTPRG.</text>
</comment>
<comment type="subcellular location">
    <subcellularLocation>
        <location evidence="1">Cell membrane</location>
        <topology evidence="1">Lipid-anchor</topology>
        <topology evidence="1">GPI-anchor</topology>
    </subcellularLocation>
</comment>
<comment type="tissue specificity">
    <text>Expressed in nervous system. Highly expressed in cerebellum. Expressed at intermediate level in thalamus, subthalamic nucleus. Weakly expressed in corpus callosum, caudate nucleus and spinal cord.</text>
</comment>
<comment type="similarity">
    <text evidence="9">Belongs to the immunoglobulin superfamily. Contactin family.</text>
</comment>
<organism>
    <name type="scientific">Homo sapiens</name>
    <name type="common">Human</name>
    <dbReference type="NCBI Taxonomy" id="9606"/>
    <lineage>
        <taxon>Eukaryota</taxon>
        <taxon>Metazoa</taxon>
        <taxon>Chordata</taxon>
        <taxon>Craniata</taxon>
        <taxon>Vertebrata</taxon>
        <taxon>Euteleostomi</taxon>
        <taxon>Mammalia</taxon>
        <taxon>Eutheria</taxon>
        <taxon>Euarchontoglires</taxon>
        <taxon>Primates</taxon>
        <taxon>Haplorrhini</taxon>
        <taxon>Catarrhini</taxon>
        <taxon>Hominidae</taxon>
        <taxon>Homo</taxon>
    </lineage>
</organism>
<keyword id="KW-0130">Cell adhesion</keyword>
<keyword id="KW-1003">Cell membrane</keyword>
<keyword id="KW-1015">Disulfide bond</keyword>
<keyword id="KW-0325">Glycoprotein</keyword>
<keyword id="KW-0336">GPI-anchor</keyword>
<keyword id="KW-0393">Immunoglobulin domain</keyword>
<keyword id="KW-0449">Lipoprotein</keyword>
<keyword id="KW-0472">Membrane</keyword>
<keyword id="KW-0914">Notch signaling pathway</keyword>
<keyword id="KW-0597">Phosphoprotein</keyword>
<keyword id="KW-1267">Proteomics identification</keyword>
<keyword id="KW-1185">Reference proteome</keyword>
<keyword id="KW-0677">Repeat</keyword>
<keyword id="KW-0732">Signal</keyword>
<proteinExistence type="evidence at protein level"/>
<dbReference type="EMBL" id="AB003592">
    <property type="protein sequence ID" value="BAA82612.1"/>
    <property type="molecule type" value="mRNA"/>
</dbReference>
<dbReference type="EMBL" id="BC113118">
    <property type="protein sequence ID" value="AAI13119.1"/>
    <property type="molecule type" value="mRNA"/>
</dbReference>
<dbReference type="CCDS" id="CCDS2557.1"/>
<dbReference type="RefSeq" id="NP_001276009.1">
    <property type="nucleotide sequence ID" value="NM_001289080.2"/>
</dbReference>
<dbReference type="RefSeq" id="NP_001276010.1">
    <property type="nucleotide sequence ID" value="NM_001289081.1"/>
</dbReference>
<dbReference type="RefSeq" id="NP_001336279.1">
    <property type="nucleotide sequence ID" value="NM_001349350.2"/>
</dbReference>
<dbReference type="RefSeq" id="NP_001336280.1">
    <property type="nucleotide sequence ID" value="NM_001349351.2"/>
</dbReference>
<dbReference type="RefSeq" id="NP_001336281.1">
    <property type="nucleotide sequence ID" value="NM_001349352.2"/>
</dbReference>
<dbReference type="RefSeq" id="NP_001336282.1">
    <property type="nucleotide sequence ID" value="NM_001349353.2"/>
</dbReference>
<dbReference type="RefSeq" id="NP_001336283.1">
    <property type="nucleotide sequence ID" value="NM_001349354.2"/>
</dbReference>
<dbReference type="RefSeq" id="NP_001336284.1">
    <property type="nucleotide sequence ID" value="NM_001349355.2"/>
</dbReference>
<dbReference type="RefSeq" id="NP_055276.1">
    <property type="nucleotide sequence ID" value="NM_014461.4"/>
</dbReference>
<dbReference type="RefSeq" id="XP_005265115.1">
    <property type="nucleotide sequence ID" value="XM_005265058.3"/>
</dbReference>
<dbReference type="RefSeq" id="XP_011531892.1">
    <property type="nucleotide sequence ID" value="XM_011533590.3"/>
</dbReference>
<dbReference type="RefSeq" id="XP_016861660.1">
    <property type="nucleotide sequence ID" value="XM_017006171.1"/>
</dbReference>
<dbReference type="RefSeq" id="XP_016861661.1">
    <property type="nucleotide sequence ID" value="XM_017006172.3"/>
</dbReference>
<dbReference type="RefSeq" id="XP_047303928.1">
    <property type="nucleotide sequence ID" value="XM_047447972.1"/>
</dbReference>
<dbReference type="RefSeq" id="XP_054202156.1">
    <property type="nucleotide sequence ID" value="XM_054346181.1"/>
</dbReference>
<dbReference type="RefSeq" id="XP_054202157.1">
    <property type="nucleotide sequence ID" value="XM_054346182.1"/>
</dbReference>
<dbReference type="RefSeq" id="XP_054202158.1">
    <property type="nucleotide sequence ID" value="XM_054346183.1"/>
</dbReference>
<dbReference type="RefSeq" id="XP_054202159.1">
    <property type="nucleotide sequence ID" value="XM_054346184.1"/>
</dbReference>
<dbReference type="SMR" id="Q9UQ52"/>
<dbReference type="BioGRID" id="118103">
    <property type="interactions" value="3"/>
</dbReference>
<dbReference type="FunCoup" id="Q9UQ52">
    <property type="interactions" value="227"/>
</dbReference>
<dbReference type="STRING" id="9606.ENSP00000407822"/>
<dbReference type="GlyCosmos" id="Q9UQ52">
    <property type="glycosylation" value="13 sites, No reported glycans"/>
</dbReference>
<dbReference type="GlyGen" id="Q9UQ52">
    <property type="glycosylation" value="14 sites, 3 N-linked glycans (1 site), 1 O-linked glycan (1 site)"/>
</dbReference>
<dbReference type="iPTMnet" id="Q9UQ52"/>
<dbReference type="PhosphoSitePlus" id="Q9UQ52"/>
<dbReference type="BioMuta" id="CNTN6"/>
<dbReference type="DMDM" id="55976622"/>
<dbReference type="jPOST" id="Q9UQ52"/>
<dbReference type="MassIVE" id="Q9UQ52"/>
<dbReference type="PaxDb" id="9606-ENSP00000407822"/>
<dbReference type="PeptideAtlas" id="Q9UQ52"/>
<dbReference type="ProteomicsDB" id="85508"/>
<dbReference type="Antibodypedia" id="9868">
    <property type="antibodies" value="134 antibodies from 29 providers"/>
</dbReference>
<dbReference type="DNASU" id="27255"/>
<dbReference type="Ensembl" id="ENST00000350110.2">
    <property type="protein sequence ID" value="ENSP00000341882.2"/>
    <property type="gene ID" value="ENSG00000134115.13"/>
</dbReference>
<dbReference type="Ensembl" id="ENST00000446702.7">
    <property type="protein sequence ID" value="ENSP00000407822.2"/>
    <property type="gene ID" value="ENSG00000134115.13"/>
</dbReference>
<dbReference type="GeneID" id="27255"/>
<dbReference type="KEGG" id="hsa:27255"/>
<dbReference type="MANE-Select" id="ENST00000446702.7">
    <property type="protein sequence ID" value="ENSP00000407822.2"/>
    <property type="RefSeq nucleotide sequence ID" value="NM_001289080.2"/>
    <property type="RefSeq protein sequence ID" value="NP_001276009.1"/>
</dbReference>
<dbReference type="UCSC" id="uc003boz.5">
    <property type="organism name" value="human"/>
</dbReference>
<dbReference type="AGR" id="HGNC:2176"/>
<dbReference type="CTD" id="27255"/>
<dbReference type="DisGeNET" id="27255"/>
<dbReference type="GeneCards" id="CNTN6"/>
<dbReference type="HGNC" id="HGNC:2176">
    <property type="gene designation" value="CNTN6"/>
</dbReference>
<dbReference type="HPA" id="ENSG00000134115">
    <property type="expression patterns" value="Tissue enhanced (brain, thyroid gland)"/>
</dbReference>
<dbReference type="MalaCards" id="CNTN6"/>
<dbReference type="MIM" id="607220">
    <property type="type" value="gene"/>
</dbReference>
<dbReference type="neXtProt" id="NX_Q9UQ52"/>
<dbReference type="OpenTargets" id="ENSG00000134115"/>
<dbReference type="PharmGKB" id="PA26690"/>
<dbReference type="VEuPathDB" id="HostDB:ENSG00000134115"/>
<dbReference type="eggNOG" id="KOG3513">
    <property type="taxonomic scope" value="Eukaryota"/>
</dbReference>
<dbReference type="GeneTree" id="ENSGT00940000160606"/>
<dbReference type="HOGENOM" id="CLU_005756_0_0_1"/>
<dbReference type="InParanoid" id="Q9UQ52"/>
<dbReference type="OMA" id="ICNVTRS"/>
<dbReference type="OrthoDB" id="5982258at2759"/>
<dbReference type="PAN-GO" id="Q9UQ52">
    <property type="GO annotations" value="6 GO annotations based on evolutionary models"/>
</dbReference>
<dbReference type="PhylomeDB" id="Q9UQ52"/>
<dbReference type="TreeFam" id="TF351103"/>
<dbReference type="PathwayCommons" id="Q9UQ52"/>
<dbReference type="Reactome" id="R-HSA-447041">
    <property type="pathway name" value="CHL1 interactions"/>
</dbReference>
<dbReference type="SignaLink" id="Q9UQ52"/>
<dbReference type="SIGNOR" id="Q9UQ52"/>
<dbReference type="BioGRID-ORCS" id="27255">
    <property type="hits" value="8 hits in 1153 CRISPR screens"/>
</dbReference>
<dbReference type="ChiTaRS" id="CNTN6">
    <property type="organism name" value="human"/>
</dbReference>
<dbReference type="GeneWiki" id="CNTN6"/>
<dbReference type="GenomeRNAi" id="27255"/>
<dbReference type="Pharos" id="Q9UQ52">
    <property type="development level" value="Tbio"/>
</dbReference>
<dbReference type="PRO" id="PR:Q9UQ52"/>
<dbReference type="Proteomes" id="UP000005640">
    <property type="component" value="Chromosome 3"/>
</dbReference>
<dbReference type="RNAct" id="Q9UQ52">
    <property type="molecule type" value="protein"/>
</dbReference>
<dbReference type="Bgee" id="ENSG00000134115">
    <property type="expression patterns" value="Expressed in cerebellar hemisphere and 122 other cell types or tissues"/>
</dbReference>
<dbReference type="ExpressionAtlas" id="Q9UQ52">
    <property type="expression patterns" value="baseline and differential"/>
</dbReference>
<dbReference type="GO" id="GO:0030424">
    <property type="term" value="C:axon"/>
    <property type="evidence" value="ECO:0000318"/>
    <property type="project" value="GO_Central"/>
</dbReference>
<dbReference type="GO" id="GO:0098688">
    <property type="term" value="C:parallel fiber to Purkinje cell synapse"/>
    <property type="evidence" value="ECO:0007669"/>
    <property type="project" value="Ensembl"/>
</dbReference>
<dbReference type="GO" id="GO:0005886">
    <property type="term" value="C:plasma membrane"/>
    <property type="evidence" value="ECO:0000318"/>
    <property type="project" value="GO_Central"/>
</dbReference>
<dbReference type="GO" id="GO:0042734">
    <property type="term" value="C:presynaptic membrane"/>
    <property type="evidence" value="ECO:0007669"/>
    <property type="project" value="Ensembl"/>
</dbReference>
<dbReference type="GO" id="GO:0098552">
    <property type="term" value="C:side of membrane"/>
    <property type="evidence" value="ECO:0007669"/>
    <property type="project" value="UniProtKB-KW"/>
</dbReference>
<dbReference type="GO" id="GO:0045202">
    <property type="term" value="C:synapse"/>
    <property type="evidence" value="ECO:0000318"/>
    <property type="project" value="GO_Central"/>
</dbReference>
<dbReference type="GO" id="GO:0098632">
    <property type="term" value="F:cell-cell adhesion mediator activity"/>
    <property type="evidence" value="ECO:0000318"/>
    <property type="project" value="GO_Central"/>
</dbReference>
<dbReference type="GO" id="GO:0007411">
    <property type="term" value="P:axon guidance"/>
    <property type="evidence" value="ECO:0000318"/>
    <property type="project" value="GO_Central"/>
</dbReference>
<dbReference type="GO" id="GO:0007155">
    <property type="term" value="P:cell adhesion"/>
    <property type="evidence" value="ECO:0000304"/>
    <property type="project" value="ProtInc"/>
</dbReference>
<dbReference type="GO" id="GO:0007417">
    <property type="term" value="P:central nervous system development"/>
    <property type="evidence" value="ECO:0000304"/>
    <property type="project" value="ProtInc"/>
</dbReference>
<dbReference type="GO" id="GO:0070593">
    <property type="term" value="P:dendrite self-avoidance"/>
    <property type="evidence" value="ECO:0000318"/>
    <property type="project" value="GO_Central"/>
</dbReference>
<dbReference type="GO" id="GO:0007156">
    <property type="term" value="P:homophilic cell adhesion via plasma membrane adhesion molecules"/>
    <property type="evidence" value="ECO:0000318"/>
    <property type="project" value="GO_Central"/>
</dbReference>
<dbReference type="GO" id="GO:0007219">
    <property type="term" value="P:Notch signaling pathway"/>
    <property type="evidence" value="ECO:0007669"/>
    <property type="project" value="UniProtKB-KW"/>
</dbReference>
<dbReference type="GO" id="GO:0045747">
    <property type="term" value="P:positive regulation of Notch signaling pathway"/>
    <property type="evidence" value="ECO:0007669"/>
    <property type="project" value="Ensembl"/>
</dbReference>
<dbReference type="GO" id="GO:0050808">
    <property type="term" value="P:synapse organization"/>
    <property type="evidence" value="ECO:0000318"/>
    <property type="project" value="GO_Central"/>
</dbReference>
<dbReference type="CDD" id="cd00063">
    <property type="entry name" value="FN3"/>
    <property type="match status" value="4"/>
</dbReference>
<dbReference type="CDD" id="cd04969">
    <property type="entry name" value="Ig5_Contactin"/>
    <property type="match status" value="1"/>
</dbReference>
<dbReference type="FunFam" id="2.60.40.10:FF:000035">
    <property type="entry name" value="Contactin 1"/>
    <property type="match status" value="1"/>
</dbReference>
<dbReference type="FunFam" id="2.60.40.10:FF:000044">
    <property type="entry name" value="Contactin 1"/>
    <property type="match status" value="1"/>
</dbReference>
<dbReference type="FunFam" id="2.60.40.10:FF:000047">
    <property type="entry name" value="Contactin 1"/>
    <property type="match status" value="1"/>
</dbReference>
<dbReference type="FunFam" id="2.60.40.10:FF:000052">
    <property type="entry name" value="Contactin 1"/>
    <property type="match status" value="1"/>
</dbReference>
<dbReference type="FunFam" id="2.60.40.10:FF:000054">
    <property type="entry name" value="Contactin 1"/>
    <property type="match status" value="1"/>
</dbReference>
<dbReference type="FunFam" id="2.60.40.10:FF:000064">
    <property type="entry name" value="Contactin 1"/>
    <property type="match status" value="1"/>
</dbReference>
<dbReference type="FunFam" id="2.60.40.10:FF:000004">
    <property type="entry name" value="DCC isoform 1"/>
    <property type="match status" value="2"/>
</dbReference>
<dbReference type="FunFam" id="2.60.40.10:FF:000005">
    <property type="entry name" value="Neuronal cell adhesion molecule"/>
    <property type="match status" value="1"/>
</dbReference>
<dbReference type="FunFam" id="2.60.40.10:FF:000028">
    <property type="entry name" value="Neuronal cell adhesion molecule"/>
    <property type="match status" value="1"/>
</dbReference>
<dbReference type="Gene3D" id="2.60.40.10">
    <property type="entry name" value="Immunoglobulins"/>
    <property type="match status" value="10"/>
</dbReference>
<dbReference type="InterPro" id="IPR003961">
    <property type="entry name" value="FN3_dom"/>
</dbReference>
<dbReference type="InterPro" id="IPR036116">
    <property type="entry name" value="FN3_sf"/>
</dbReference>
<dbReference type="InterPro" id="IPR007110">
    <property type="entry name" value="Ig-like_dom"/>
</dbReference>
<dbReference type="InterPro" id="IPR036179">
    <property type="entry name" value="Ig-like_dom_sf"/>
</dbReference>
<dbReference type="InterPro" id="IPR013783">
    <property type="entry name" value="Ig-like_fold"/>
</dbReference>
<dbReference type="InterPro" id="IPR013098">
    <property type="entry name" value="Ig_I-set"/>
</dbReference>
<dbReference type="InterPro" id="IPR003599">
    <property type="entry name" value="Ig_sub"/>
</dbReference>
<dbReference type="InterPro" id="IPR003598">
    <property type="entry name" value="Ig_sub2"/>
</dbReference>
<dbReference type="PANTHER" id="PTHR44170:SF38">
    <property type="entry name" value="CONTACTIN 6"/>
    <property type="match status" value="1"/>
</dbReference>
<dbReference type="PANTHER" id="PTHR44170">
    <property type="entry name" value="PROTEIN SIDEKICK"/>
    <property type="match status" value="1"/>
</dbReference>
<dbReference type="Pfam" id="PF00041">
    <property type="entry name" value="fn3"/>
    <property type="match status" value="2"/>
</dbReference>
<dbReference type="Pfam" id="PF07679">
    <property type="entry name" value="I-set"/>
    <property type="match status" value="2"/>
</dbReference>
<dbReference type="Pfam" id="PF13927">
    <property type="entry name" value="Ig_3"/>
    <property type="match status" value="4"/>
</dbReference>
<dbReference type="SMART" id="SM00060">
    <property type="entry name" value="FN3"/>
    <property type="match status" value="4"/>
</dbReference>
<dbReference type="SMART" id="SM00409">
    <property type="entry name" value="IG"/>
    <property type="match status" value="6"/>
</dbReference>
<dbReference type="SMART" id="SM00408">
    <property type="entry name" value="IGc2"/>
    <property type="match status" value="6"/>
</dbReference>
<dbReference type="SUPFAM" id="SSF49265">
    <property type="entry name" value="Fibronectin type III"/>
    <property type="match status" value="2"/>
</dbReference>
<dbReference type="SUPFAM" id="SSF48726">
    <property type="entry name" value="Immunoglobulin"/>
    <property type="match status" value="6"/>
</dbReference>
<dbReference type="PROSITE" id="PS50853">
    <property type="entry name" value="FN3"/>
    <property type="match status" value="4"/>
</dbReference>
<dbReference type="PROSITE" id="PS50835">
    <property type="entry name" value="IG_LIKE"/>
    <property type="match status" value="6"/>
</dbReference>
<accession>Q9UQ52</accession>
<accession>Q2KHM2</accession>
<reference key="1">
    <citation type="journal article" date="1998" name="J. Neurosci. Res.">
        <title>cDNA cloning and chromosomal localization of neural adhesion molecule, NB-3 in human.</title>
        <authorList>
            <person name="Kamei Y."/>
            <person name="Tsutsumi O."/>
            <person name="Taketani Y."/>
            <person name="Watanabe K."/>
        </authorList>
    </citation>
    <scope>NUCLEOTIDE SEQUENCE [MRNA]</scope>
    <source>
        <tissue>Cerebellum</tissue>
    </source>
</reference>
<reference key="2">
    <citation type="journal article" date="2004" name="Genome Res.">
        <title>The status, quality, and expansion of the NIH full-length cDNA project: the Mammalian Gene Collection (MGC).</title>
        <authorList>
            <consortium name="The MGC Project Team"/>
        </authorList>
    </citation>
    <scope>NUCLEOTIDE SEQUENCE [LARGE SCALE MRNA]</scope>
</reference>
<reference key="3">
    <citation type="journal article" date="2009" name="Sci. Signal.">
        <title>Quantitative phosphoproteomic analysis of T cell receptor signaling reveals system-wide modulation of protein-protein interactions.</title>
        <authorList>
            <person name="Mayya V."/>
            <person name="Lundgren D.H."/>
            <person name="Hwang S.-I."/>
            <person name="Rezaul K."/>
            <person name="Wu L."/>
            <person name="Eng J.K."/>
            <person name="Rodionov V."/>
            <person name="Han D.K."/>
        </authorList>
    </citation>
    <scope>PHOSPHORYLATION [LARGE SCALE ANALYSIS] AT TYR-882</scope>
    <scope>IDENTIFICATION BY MASS SPECTROMETRY [LARGE SCALE ANALYSIS]</scope>
    <source>
        <tissue>Leukemic T-cell</tissue>
    </source>
</reference>
<reference key="4">
    <citation type="journal article" date="2010" name="Proc. Natl. Acad. Sci. U.S.A.">
        <title>The protein tyrosine phosphatases PTPRZ and PTPRG bind to distinct members of the contactin family of neural recognition molecules.</title>
        <authorList>
            <person name="Bouyain S."/>
            <person name="Watkins D.J."/>
        </authorList>
    </citation>
    <scope>INTERACTION WITH PTPRG</scope>
</reference>
<reference key="5">
    <citation type="journal article" date="2006" name="Science">
        <title>The consensus coding sequences of human breast and colorectal cancers.</title>
        <authorList>
            <person name="Sjoeblom T."/>
            <person name="Jones S."/>
            <person name="Wood L.D."/>
            <person name="Parsons D.W."/>
            <person name="Lin J."/>
            <person name="Barber T.D."/>
            <person name="Mandelker D."/>
            <person name="Leary R.J."/>
            <person name="Ptak J."/>
            <person name="Silliman N."/>
            <person name="Szabo S."/>
            <person name="Buckhaults P."/>
            <person name="Farrell C."/>
            <person name="Meeh P."/>
            <person name="Markowitz S.D."/>
            <person name="Willis J."/>
            <person name="Dawson D."/>
            <person name="Willson J.K.V."/>
            <person name="Gazdar A.F."/>
            <person name="Hartigan J."/>
            <person name="Wu L."/>
            <person name="Liu C."/>
            <person name="Parmigiani G."/>
            <person name="Park B.H."/>
            <person name="Bachman K.E."/>
            <person name="Papadopoulos N."/>
            <person name="Vogelstein B."/>
            <person name="Kinzler K.W."/>
            <person name="Velculescu V.E."/>
        </authorList>
    </citation>
    <scope>VARIANTS [LARGE SCALE ANALYSIS] ALA-108 AND CYS-585</scope>
</reference>
<reference key="6">
    <citation type="journal article" date="2011" name="Arch. Neurol.">
        <title>Resequencing of 29 candidate genes in patients with familial and sporadic amyotrophic lateral sclerosis.</title>
        <authorList>
            <person name="Daoud H."/>
            <person name="Valdmanis P.N."/>
            <person name="Gros-Louis F."/>
            <person name="Belzil V."/>
            <person name="Spiegelman D."/>
            <person name="Henrion E."/>
            <person name="Diallo O."/>
            <person name="Desjarlais A."/>
            <person name="Gauthier J."/>
            <person name="Camu W."/>
            <person name="Dion P.A."/>
            <person name="Rouleau G.A."/>
        </authorList>
    </citation>
    <scope>VARIANTS GLN-303; VAL-314 AND VAL-954</scope>
</reference>
<gene>
    <name type="primary">CNTN6</name>
</gene>
<name>CNTN6_HUMAN</name>
<protein>
    <recommendedName>
        <fullName>Contactin-6</fullName>
    </recommendedName>
    <alternativeName>
        <fullName>Neural recognition molecule NB-3</fullName>
        <shortName>hNB-3</shortName>
    </alternativeName>
</protein>
<sequence>MRLLWKLVILLPLINSSAGDGLLSRPIFTQEPHDVIFPLDLSKSEVILNCAANGYPSPHYRWKQNGTDIDFTMSYHYRLDGGSLAINSPHTDQDIGMYQCLATNLLGTILSRKAKLQFAYIEDFETKTRSTVSVREGQGVVLLCGPPPHFGDLSYAWTFNDNPLYVQEDNRRFVSQETGNLYIAKVEPSDVGNYTCFITNKEAQRSVQGPPTPLVQRTDGVMGEYEPKIEVRFPETIQAAKDSSVKLECFALGNPVPDISWRRLDGSPLPGKVKYSKSQAILEIPNFQQEDEGFYECIASNLRGRNLAKGQLIFYAPPEWEQKIQNTHLSIYDNLLWECKASGKPNPWYTWLKNGERLNPEERIQIENGTLIITMLNVSDSGVYQCAAENKYQIIYANAELRVLASAPDFSKSPVKKKSFVQVGGDIVIGCKPNAFPRAAISWKRGTETLRQSKRIFLLEDGSLKIYNITRSDAGSYTCIATNQFGTAKNTGSLIVKERTVITVPPSKMDVTVGESIVLPCQVSHDPSIEVVFVWFFNGDVIDLKKGVAHFERIGGESVGDLMIRNIQLHHSGKYLCTVQTTLESLSAVADIIVRGPPGPPEDVQVEDISSTTSQLSWRAGPDNNSPIQIFTIQTRTPFSVGWQAVATVPEILNGKTYNATVVGLSPWVEYEFRVVAGNSIGIGEPSEPSELLRTKASVPVVAPVNIHGGGGSRSELVITWESIPEELQNGEGFGYIIMFRPVGSTTWSKEKVSSVESSRFVYRNESIIPLSPFEVKVGVYNNEGEGSLSTVTIVYSGEDEPQLAPRGTSLQSFSASEMEVSWNAIAWNRNTGRVLGYEVLYWTDDSKESMIGKIRVSGNVTTKNITGLKANTIYFASVRAYNTAGTGPSSPPVNVTTKKSPPSQPPANIAWKLTNSKLCLNWEHVKTMENESEVLGYKILYRQNRQSKTHILETNNTSAELLVPFEEDYLIEIRTVSDGGDGSSSEEIRIPKMSSLSSRGIQFLEPSTHFLSIVIVIFHCFAIQPLI</sequence>
<feature type="signal peptide" evidence="2">
    <location>
        <begin position="1"/>
        <end position="19"/>
    </location>
</feature>
<feature type="chain" id="PRO_0000014727" description="Contactin-6">
    <location>
        <begin position="20"/>
        <end position="999"/>
    </location>
</feature>
<feature type="propeptide" id="PRO_0000014728" description="Removed in mature form" evidence="2">
    <location>
        <begin position="1000"/>
        <end position="1028"/>
    </location>
</feature>
<feature type="domain" description="Ig-like C2-type 1">
    <location>
        <begin position="26"/>
        <end position="117"/>
    </location>
</feature>
<feature type="domain" description="Ig-like C2-type 2">
    <location>
        <begin position="122"/>
        <end position="208"/>
    </location>
</feature>
<feature type="domain" description="Ig-like C2-type 3">
    <location>
        <begin position="227"/>
        <end position="308"/>
    </location>
</feature>
<feature type="domain" description="Ig-like C2-type 4">
    <location>
        <begin position="318"/>
        <end position="402"/>
    </location>
</feature>
<feature type="domain" description="Ig-like C2-type 5">
    <location>
        <begin position="408"/>
        <end position="495"/>
    </location>
</feature>
<feature type="domain" description="Ig-like C2-type 6">
    <location>
        <begin position="499"/>
        <end position="587"/>
    </location>
</feature>
<feature type="domain" description="Fibronectin type-III 1" evidence="4">
    <location>
        <begin position="600"/>
        <end position="698"/>
    </location>
</feature>
<feature type="domain" description="Fibronectin type-III 2" evidence="4">
    <location>
        <begin position="703"/>
        <end position="800"/>
    </location>
</feature>
<feature type="domain" description="Fibronectin type-III 3" evidence="4">
    <location>
        <begin position="805"/>
        <end position="901"/>
    </location>
</feature>
<feature type="domain" description="Fibronectin type-III 4" evidence="4">
    <location>
        <begin position="902"/>
        <end position="996"/>
    </location>
</feature>
<feature type="region of interest" description="Disordered" evidence="5">
    <location>
        <begin position="887"/>
        <end position="908"/>
    </location>
</feature>
<feature type="compositionally biased region" description="Polar residues" evidence="5">
    <location>
        <begin position="887"/>
        <end position="902"/>
    </location>
</feature>
<feature type="modified residue" description="Phosphotyrosine" evidence="10">
    <location>
        <position position="882"/>
    </location>
</feature>
<feature type="lipid moiety-binding region" description="GPI-anchor amidated serine" evidence="2">
    <location>
        <position position="999"/>
    </location>
</feature>
<feature type="glycosylation site" description="N-linked (GlcNAc...) asparagine" evidence="2">
    <location>
        <position position="65"/>
    </location>
</feature>
<feature type="glycosylation site" description="N-linked (GlcNAc...) asparagine" evidence="2">
    <location>
        <position position="193"/>
    </location>
</feature>
<feature type="glycosylation site" description="N-linked (GlcNAc...) asparagine" evidence="2">
    <location>
        <position position="368"/>
    </location>
</feature>
<feature type="glycosylation site" description="N-linked (GlcNAc...) asparagine" evidence="2">
    <location>
        <position position="377"/>
    </location>
</feature>
<feature type="glycosylation site" description="N-linked (GlcNAc...) asparagine" evidence="2">
    <location>
        <position position="468"/>
    </location>
</feature>
<feature type="glycosylation site" description="N-linked (GlcNAc...) asparagine" evidence="2">
    <location>
        <position position="659"/>
    </location>
</feature>
<feature type="glycosylation site" description="N-linked (GlcNAc...) asparagine" evidence="2">
    <location>
        <position position="765"/>
    </location>
</feature>
<feature type="glycosylation site" description="N-linked (GlcNAc...) asparagine" evidence="2">
    <location>
        <position position="860"/>
    </location>
</feature>
<feature type="glycosylation site" description="N-linked (GlcNAc...) asparagine" evidence="2">
    <location>
        <position position="865"/>
    </location>
</feature>
<feature type="glycosylation site" description="N-linked (GlcNAc...) asparagine" evidence="2">
    <location>
        <position position="895"/>
    </location>
</feature>
<feature type="glycosylation site" description="N-linked (GlcNAc...) asparagine" evidence="2">
    <location>
        <position position="931"/>
    </location>
</feature>
<feature type="glycosylation site" description="N-linked (GlcNAc...) asparagine" evidence="2">
    <location>
        <position position="956"/>
    </location>
</feature>
<feature type="glycosylation site" description="N-linked (GlcNAc...) asparagine" evidence="2">
    <location>
        <position position="957"/>
    </location>
</feature>
<feature type="disulfide bond" evidence="3">
    <location>
        <begin position="50"/>
        <end position="100"/>
    </location>
</feature>
<feature type="disulfide bond" evidence="3">
    <location>
        <begin position="144"/>
        <end position="196"/>
    </location>
</feature>
<feature type="disulfide bond" evidence="3">
    <location>
        <begin position="249"/>
        <end position="297"/>
    </location>
</feature>
<feature type="disulfide bond" evidence="3">
    <location>
        <begin position="339"/>
        <end position="386"/>
    </location>
</feature>
<feature type="disulfide bond" evidence="3">
    <location>
        <begin position="431"/>
        <end position="479"/>
    </location>
</feature>
<feature type="disulfide bond" evidence="3">
    <location>
        <begin position="521"/>
        <end position="577"/>
    </location>
</feature>
<feature type="sequence variant" id="VAR_035509" description="In a breast cancer sample; somatic mutation." evidence="6">
    <original>T</original>
    <variation>A</variation>
    <location>
        <position position="108"/>
    </location>
</feature>
<feature type="sequence variant" id="VAR_033611" description="In dbSNP:rs6808056.">
    <original>F</original>
    <variation>S</variation>
    <location>
        <position position="150"/>
    </location>
</feature>
<feature type="sequence variant" id="VAR_065744" description="In dbSNP:rs41293401." evidence="8">
    <original>R</original>
    <variation>Q</variation>
    <location>
        <position position="303"/>
    </location>
</feature>
<feature type="sequence variant" id="VAR_065745" description="In dbSNP:rs774763830." evidence="8">
    <original>F</original>
    <variation>V</variation>
    <location>
        <position position="314"/>
    </location>
</feature>
<feature type="sequence variant" id="VAR_019913" description="In dbSNP:rs265771.">
    <original>A</original>
    <variation>S</variation>
    <location>
        <position position="440"/>
    </location>
</feature>
<feature type="sequence variant" id="VAR_035510" description="In a breast cancer sample; somatic mutation." evidence="6">
    <original>S</original>
    <variation>C</variation>
    <location>
        <position position="585"/>
    </location>
</feature>
<feature type="sequence variant" id="VAR_065746" description="In a patient with amyotrophic lateral sclerosis; dbSNP:rs1447631177." evidence="8">
    <original>E</original>
    <variation>V</variation>
    <location>
        <position position="954"/>
    </location>
</feature>
<evidence type="ECO:0000250" key="1"/>
<evidence type="ECO:0000255" key="2"/>
<evidence type="ECO:0000255" key="3">
    <source>
        <dbReference type="PROSITE-ProRule" id="PRU00114"/>
    </source>
</evidence>
<evidence type="ECO:0000255" key="4">
    <source>
        <dbReference type="PROSITE-ProRule" id="PRU00316"/>
    </source>
</evidence>
<evidence type="ECO:0000256" key="5">
    <source>
        <dbReference type="SAM" id="MobiDB-lite"/>
    </source>
</evidence>
<evidence type="ECO:0000269" key="6">
    <source>
    </source>
</evidence>
<evidence type="ECO:0000269" key="7">
    <source>
    </source>
</evidence>
<evidence type="ECO:0000269" key="8">
    <source>
    </source>
</evidence>
<evidence type="ECO:0000305" key="9"/>
<evidence type="ECO:0007744" key="10">
    <source>
    </source>
</evidence>